<comment type="function">
    <text evidence="3 9 10 11 14 15">Catalyzes the formation of cAMP in response to activation of G protein-coupled receptors (Probable). Functions in signaling cascades activated namely by thrombin and sphingosine 1-phosphate and mediates regulation of cAMP synthesis through synergistic action of the stimulatory G alpha protein with GNA13 (PubMed:18541530, PubMed:23229509). Also, during inflammation, mediates zymosan-induced increase intracellular cAMP, leading to protein kinase A pathway activation in order to modulate innate immune responses through heterotrimeric G proteins G(12/13) (By similarity). Functions in signaling cascades activated namely by dopamine and C5 alpha chain and mediates regulation of cAMP synthesis through synergistic action of the stimulatory G protein with G beta:gamma complex (PubMed:23229509, PubMed:23842570). Functions, through cAMP response regulation, to keep inflammation under control during bacterial infection by sensing the presence of serum factors, such as the bioactive lysophospholipid (LPA) that regulate LPS-induced TNF-alpha production. However, it is also required for the optimal functions of B and T cells during adaptive immune responses by regulating cAMP synthesis in both B and T cells (By similarity).</text>
</comment>
<comment type="catalytic activity">
    <reaction evidence="14 15">
        <text>ATP = 3',5'-cyclic AMP + diphosphate</text>
        <dbReference type="Rhea" id="RHEA:15389"/>
        <dbReference type="ChEBI" id="CHEBI:30616"/>
        <dbReference type="ChEBI" id="CHEBI:33019"/>
        <dbReference type="ChEBI" id="CHEBI:58165"/>
        <dbReference type="EC" id="4.6.1.1"/>
    </reaction>
</comment>
<comment type="cofactor">
    <cofactor evidence="2">
        <name>Mg(2+)</name>
        <dbReference type="ChEBI" id="CHEBI:18420"/>
    </cofactor>
    <cofactor evidence="2">
        <name>Mn(2+)</name>
        <dbReference type="ChEBI" id="CHEBI:29035"/>
    </cofactor>
    <text evidence="2">Binds 2 magnesium ions per subunit. Is also active with manganese (in vitro).</text>
</comment>
<comment type="activity regulation">
    <text evidence="3 7 9 10">Activated by the G protein alpha subunit (PubMed:18541530). Activated by the G protein beta and gamma subunit complex (PubMed:23229509). Activated by GNA13 and GNA12 (PubMed:18541530). Ethanol and phorbol 12,13-dibutanoate significantly potentiate adenylate cyclase activity generated in response to the activation of the prostanoid receptor by the agonist prostaglandin E1(1-) in a PKC-dependent manner (PubMed:12454008). Inhibited by lithium (By similarity).</text>
</comment>
<comment type="subcellular location">
    <subcellularLocation>
        <location>Membrane</location>
        <topology>Multi-pass membrane protein</topology>
    </subcellularLocation>
</comment>
<comment type="domain">
    <text evidence="1">The protein contains two modules with six transmembrane helices each; both are required for catalytic activity. Isolated N-terminal or C-terminal guanylate cyclase domains have no catalytic activity, but when they are brought together, enzyme activity is restored. The active site is at the interface of the two domains. Both contribute substrate-binding residues, but the catalytic metal ions are bound exclusively via the N-terminal guanylate cyclase domain.</text>
</comment>
<comment type="PTM">
    <text evidence="7">Phosphorylated by PRKCD.</text>
</comment>
<comment type="similarity">
    <text evidence="5">Belongs to the adenylyl cyclase class-4/guanylyl cyclase family.</text>
</comment>
<comment type="sequence caution" evidence="13">
    <conflict type="erroneous initiation">
        <sequence resource="EMBL-CDS" id="BAA05021"/>
    </conflict>
</comment>
<accession>P51828</accession>
<accession>A0AVA6</accession>
<name>ADCY7_HUMAN</name>
<proteinExistence type="evidence at protein level"/>
<dbReference type="EC" id="4.6.1.1" evidence="14 15"/>
<dbReference type="EMBL" id="D25538">
    <property type="protein sequence ID" value="BAA05021.2"/>
    <property type="status" value="ALT_INIT"/>
    <property type="molecule type" value="mRNA"/>
</dbReference>
<dbReference type="EMBL" id="AC007597">
    <property type="status" value="NOT_ANNOTATED_CDS"/>
    <property type="molecule type" value="Genomic_DNA"/>
</dbReference>
<dbReference type="EMBL" id="BC126271">
    <property type="protein sequence ID" value="AAI26272.1"/>
    <property type="molecule type" value="mRNA"/>
</dbReference>
<dbReference type="CCDS" id="CCDS10741.1"/>
<dbReference type="PIR" id="PN0453">
    <property type="entry name" value="PN0453"/>
</dbReference>
<dbReference type="RefSeq" id="NP_001105.1">
    <property type="nucleotide sequence ID" value="NM_001114.5"/>
</dbReference>
<dbReference type="RefSeq" id="XP_016878384.1">
    <property type="nucleotide sequence ID" value="XM_017022895.1"/>
</dbReference>
<dbReference type="RefSeq" id="XP_047289510.1">
    <property type="nucleotide sequence ID" value="XM_047433554.1"/>
</dbReference>
<dbReference type="RefSeq" id="XP_047289511.1">
    <property type="nucleotide sequence ID" value="XM_047433555.1"/>
</dbReference>
<dbReference type="RefSeq" id="XP_047289512.1">
    <property type="nucleotide sequence ID" value="XM_047433556.1"/>
</dbReference>
<dbReference type="RefSeq" id="XP_047289513.1">
    <property type="nucleotide sequence ID" value="XM_047433557.1"/>
</dbReference>
<dbReference type="RefSeq" id="XP_047289514.1">
    <property type="nucleotide sequence ID" value="XM_047433558.1"/>
</dbReference>
<dbReference type="RefSeq" id="XP_047289515.1">
    <property type="nucleotide sequence ID" value="XM_047433559.1"/>
</dbReference>
<dbReference type="RefSeq" id="XP_047289516.1">
    <property type="nucleotide sequence ID" value="XM_047433560.1"/>
</dbReference>
<dbReference type="RefSeq" id="XP_047289517.1">
    <property type="nucleotide sequence ID" value="XM_047433561.1"/>
</dbReference>
<dbReference type="RefSeq" id="XP_047289518.1">
    <property type="nucleotide sequence ID" value="XM_047433562.1"/>
</dbReference>
<dbReference type="RefSeq" id="XP_047289519.1">
    <property type="nucleotide sequence ID" value="XM_047433563.1"/>
</dbReference>
<dbReference type="RefSeq" id="XP_054235463.1">
    <property type="nucleotide sequence ID" value="XM_054379488.1"/>
</dbReference>
<dbReference type="RefSeq" id="XP_054235464.1">
    <property type="nucleotide sequence ID" value="XM_054379489.1"/>
</dbReference>
<dbReference type="RefSeq" id="XP_054235465.1">
    <property type="nucleotide sequence ID" value="XM_054379490.1"/>
</dbReference>
<dbReference type="RefSeq" id="XP_054235466.1">
    <property type="nucleotide sequence ID" value="XM_054379491.1"/>
</dbReference>
<dbReference type="RefSeq" id="XP_054235467.1">
    <property type="nucleotide sequence ID" value="XM_054379492.1"/>
</dbReference>
<dbReference type="RefSeq" id="XP_054235468.1">
    <property type="nucleotide sequence ID" value="XM_054379493.1"/>
</dbReference>
<dbReference type="RefSeq" id="XP_054235469.1">
    <property type="nucleotide sequence ID" value="XM_054379494.1"/>
</dbReference>
<dbReference type="RefSeq" id="XP_054235470.1">
    <property type="nucleotide sequence ID" value="XM_054379495.1"/>
</dbReference>
<dbReference type="RefSeq" id="XP_054235471.1">
    <property type="nucleotide sequence ID" value="XM_054379496.1"/>
</dbReference>
<dbReference type="RefSeq" id="XP_054235472.1">
    <property type="nucleotide sequence ID" value="XM_054379497.1"/>
</dbReference>
<dbReference type="SMR" id="P51828"/>
<dbReference type="BioGRID" id="106626">
    <property type="interactions" value="13"/>
</dbReference>
<dbReference type="FunCoup" id="P51828">
    <property type="interactions" value="1799"/>
</dbReference>
<dbReference type="IntAct" id="P51828">
    <property type="interactions" value="7"/>
</dbReference>
<dbReference type="STRING" id="9606.ENSP00000501053"/>
<dbReference type="BindingDB" id="P51828"/>
<dbReference type="ChEMBL" id="CHEMBL2097167"/>
<dbReference type="DrugBank" id="DB02587">
    <property type="generic name" value="Colforsin"/>
</dbReference>
<dbReference type="GlyCosmos" id="P51828">
    <property type="glycosylation" value="3 sites, No reported glycans"/>
</dbReference>
<dbReference type="GlyGen" id="P51828">
    <property type="glycosylation" value="3 sites"/>
</dbReference>
<dbReference type="iPTMnet" id="P51828"/>
<dbReference type="PhosphoSitePlus" id="P51828"/>
<dbReference type="SwissPalm" id="P51828"/>
<dbReference type="BioMuta" id="ADCY7"/>
<dbReference type="DMDM" id="1706218"/>
<dbReference type="jPOST" id="P51828"/>
<dbReference type="MassIVE" id="P51828"/>
<dbReference type="PaxDb" id="9606-ENSP00000378187"/>
<dbReference type="PeptideAtlas" id="P51828"/>
<dbReference type="ProteomicsDB" id="56430"/>
<dbReference type="Antibodypedia" id="28237">
    <property type="antibodies" value="173 antibodies from 28 providers"/>
</dbReference>
<dbReference type="DNASU" id="113"/>
<dbReference type="Ensembl" id="ENST00000254235.7">
    <property type="protein sequence ID" value="ENSP00000254235.3"/>
    <property type="gene ID" value="ENSG00000121281.13"/>
</dbReference>
<dbReference type="Ensembl" id="ENST00000394697.7">
    <property type="protein sequence ID" value="ENSP00000378187.2"/>
    <property type="gene ID" value="ENSG00000121281.13"/>
</dbReference>
<dbReference type="Ensembl" id="ENST00000673801.1">
    <property type="protein sequence ID" value="ENSP00000501053.1"/>
    <property type="gene ID" value="ENSG00000121281.13"/>
</dbReference>
<dbReference type="GeneID" id="113"/>
<dbReference type="KEGG" id="hsa:113"/>
<dbReference type="MANE-Select" id="ENST00000673801.1">
    <property type="protein sequence ID" value="ENSP00000501053.1"/>
    <property type="RefSeq nucleotide sequence ID" value="NM_001114.5"/>
    <property type="RefSeq protein sequence ID" value="NP_001105.1"/>
</dbReference>
<dbReference type="UCSC" id="uc002egd.3">
    <property type="organism name" value="human"/>
</dbReference>
<dbReference type="AGR" id="HGNC:238"/>
<dbReference type="CTD" id="113"/>
<dbReference type="DisGeNET" id="113"/>
<dbReference type="GeneCards" id="ADCY7"/>
<dbReference type="HGNC" id="HGNC:238">
    <property type="gene designation" value="ADCY7"/>
</dbReference>
<dbReference type="HPA" id="ENSG00000121281">
    <property type="expression patterns" value="Tissue enhanced (lymphoid)"/>
</dbReference>
<dbReference type="MIM" id="600385">
    <property type="type" value="gene"/>
</dbReference>
<dbReference type="neXtProt" id="NX_P51828"/>
<dbReference type="OpenTargets" id="ENSG00000121281"/>
<dbReference type="PharmGKB" id="PA28"/>
<dbReference type="VEuPathDB" id="HostDB:ENSG00000121281"/>
<dbReference type="eggNOG" id="KOG3619">
    <property type="taxonomic scope" value="Eukaryota"/>
</dbReference>
<dbReference type="GeneTree" id="ENSGT00940000159096"/>
<dbReference type="HOGENOM" id="CLU_001072_2_5_1"/>
<dbReference type="InParanoid" id="P51828"/>
<dbReference type="OMA" id="LIMPKTA"/>
<dbReference type="OrthoDB" id="10035433at2759"/>
<dbReference type="PAN-GO" id="P51828">
    <property type="GO annotations" value="3 GO annotations based on evolutionary models"/>
</dbReference>
<dbReference type="PhylomeDB" id="P51828"/>
<dbReference type="TreeFam" id="TF313845"/>
<dbReference type="BRENDA" id="4.6.1.1">
    <property type="organism ID" value="2681"/>
</dbReference>
<dbReference type="PathwayCommons" id="P51828"/>
<dbReference type="Reactome" id="R-HSA-163359">
    <property type="pathway name" value="Glucagon signaling in metabolic regulation"/>
</dbReference>
<dbReference type="Reactome" id="R-HSA-163615">
    <property type="pathway name" value="PKA activation"/>
</dbReference>
<dbReference type="Reactome" id="R-HSA-164378">
    <property type="pathway name" value="PKA activation in glucagon signalling"/>
</dbReference>
<dbReference type="Reactome" id="R-HSA-170660">
    <property type="pathway name" value="Adenylate cyclase activating pathway"/>
</dbReference>
<dbReference type="Reactome" id="R-HSA-170670">
    <property type="pathway name" value="Adenylate cyclase inhibitory pathway"/>
</dbReference>
<dbReference type="Reactome" id="R-HSA-418555">
    <property type="pathway name" value="G alpha (s) signalling events"/>
</dbReference>
<dbReference type="Reactome" id="R-HSA-418594">
    <property type="pathway name" value="G alpha (i) signalling events"/>
</dbReference>
<dbReference type="Reactome" id="R-HSA-418597">
    <property type="pathway name" value="G alpha (z) signalling events"/>
</dbReference>
<dbReference type="Reactome" id="R-HSA-432040">
    <property type="pathway name" value="Vasopressin regulates renal water homeostasis via Aquaporins"/>
</dbReference>
<dbReference type="Reactome" id="R-HSA-5610787">
    <property type="pathway name" value="Hedgehog 'off' state"/>
</dbReference>
<dbReference type="Reactome" id="R-HSA-9634597">
    <property type="pathway name" value="GPER1 signaling"/>
</dbReference>
<dbReference type="Reactome" id="R-HSA-9660821">
    <property type="pathway name" value="ADORA2B mediated anti-inflammatory cytokines production"/>
</dbReference>
<dbReference type="Reactome" id="R-HSA-9664323">
    <property type="pathway name" value="FCGR3A-mediated IL10 synthesis"/>
</dbReference>
<dbReference type="Reactome" id="R-HSA-9856530">
    <property type="pathway name" value="High laminar flow shear stress activates signaling by PIEZO1 and PECAM1:CDH5:KDR in endothelial cells"/>
</dbReference>
<dbReference type="SignaLink" id="P51828"/>
<dbReference type="SIGNOR" id="P51828"/>
<dbReference type="BioGRID-ORCS" id="113">
    <property type="hits" value="18 hits in 1157 CRISPR screens"/>
</dbReference>
<dbReference type="ChiTaRS" id="ADCY7">
    <property type="organism name" value="human"/>
</dbReference>
<dbReference type="GeneWiki" id="ADCY7"/>
<dbReference type="GenomeRNAi" id="113"/>
<dbReference type="Pharos" id="P51828">
    <property type="development level" value="Tbio"/>
</dbReference>
<dbReference type="PRO" id="PR:P51828"/>
<dbReference type="Proteomes" id="UP000005640">
    <property type="component" value="Chromosome 16"/>
</dbReference>
<dbReference type="RNAct" id="P51828">
    <property type="molecule type" value="protein"/>
</dbReference>
<dbReference type="Bgee" id="ENSG00000121281">
    <property type="expression patterns" value="Expressed in granulocyte and 186 other cell types or tissues"/>
</dbReference>
<dbReference type="ExpressionAtlas" id="P51828">
    <property type="expression patterns" value="baseline and differential"/>
</dbReference>
<dbReference type="GO" id="GO:0016020">
    <property type="term" value="C:membrane"/>
    <property type="evidence" value="ECO:0000314"/>
    <property type="project" value="UniProtKB"/>
</dbReference>
<dbReference type="GO" id="GO:0005886">
    <property type="term" value="C:plasma membrane"/>
    <property type="evidence" value="ECO:0000250"/>
    <property type="project" value="UniProtKB"/>
</dbReference>
<dbReference type="GO" id="GO:0004016">
    <property type="term" value="F:adenylate cyclase activity"/>
    <property type="evidence" value="ECO:0000314"/>
    <property type="project" value="UniProtKB"/>
</dbReference>
<dbReference type="GO" id="GO:0005524">
    <property type="term" value="F:ATP binding"/>
    <property type="evidence" value="ECO:0007669"/>
    <property type="project" value="UniProtKB-KW"/>
</dbReference>
<dbReference type="GO" id="GO:0046872">
    <property type="term" value="F:metal ion binding"/>
    <property type="evidence" value="ECO:0007669"/>
    <property type="project" value="UniProtKB-KW"/>
</dbReference>
<dbReference type="GO" id="GO:0007189">
    <property type="term" value="P:adenylate cyclase-activating G protein-coupled receptor signaling pathway"/>
    <property type="evidence" value="ECO:0000318"/>
    <property type="project" value="GO_Central"/>
</dbReference>
<dbReference type="GO" id="GO:0006171">
    <property type="term" value="P:cAMP biosynthetic process"/>
    <property type="evidence" value="ECO:0000314"/>
    <property type="project" value="UniProtKB"/>
</dbReference>
<dbReference type="GO" id="GO:0071361">
    <property type="term" value="P:cellular response to ethanol"/>
    <property type="evidence" value="ECO:0000314"/>
    <property type="project" value="UniProtKB"/>
</dbReference>
<dbReference type="GO" id="GO:0071285">
    <property type="term" value="P:cellular response to lithium ion"/>
    <property type="evidence" value="ECO:0000250"/>
    <property type="project" value="UniProtKB"/>
</dbReference>
<dbReference type="GO" id="GO:0035556">
    <property type="term" value="P:intracellular signal transduction"/>
    <property type="evidence" value="ECO:0007669"/>
    <property type="project" value="InterPro"/>
</dbReference>
<dbReference type="GO" id="GO:0060135">
    <property type="term" value="P:maternal process involved in female pregnancy"/>
    <property type="evidence" value="ECO:0007669"/>
    <property type="project" value="Ensembl"/>
</dbReference>
<dbReference type="GO" id="GO:1900016">
    <property type="term" value="P:negative regulation of cytokine production involved in inflammatory response"/>
    <property type="evidence" value="ECO:0000250"/>
    <property type="project" value="UniProtKB"/>
</dbReference>
<dbReference type="GO" id="GO:0002819">
    <property type="term" value="P:regulation of adaptive immune response"/>
    <property type="evidence" value="ECO:0000250"/>
    <property type="project" value="UniProtKB"/>
</dbReference>
<dbReference type="CDD" id="cd07302">
    <property type="entry name" value="CHD"/>
    <property type="match status" value="2"/>
</dbReference>
<dbReference type="FunFam" id="3.30.70.1230:FF:000003">
    <property type="entry name" value="Adenylate cyclase"/>
    <property type="match status" value="1"/>
</dbReference>
<dbReference type="FunFam" id="3.30.70.1230:FF:000012">
    <property type="entry name" value="Adenylate cyclase"/>
    <property type="match status" value="1"/>
</dbReference>
<dbReference type="Gene3D" id="3.30.70.1230">
    <property type="entry name" value="Nucleotide cyclase"/>
    <property type="match status" value="2"/>
</dbReference>
<dbReference type="InterPro" id="IPR001054">
    <property type="entry name" value="A/G_cyclase"/>
</dbReference>
<dbReference type="InterPro" id="IPR018297">
    <property type="entry name" value="A/G_cyclase_CS"/>
</dbReference>
<dbReference type="InterPro" id="IPR032628">
    <property type="entry name" value="AC_N"/>
</dbReference>
<dbReference type="InterPro" id="IPR030672">
    <property type="entry name" value="Adcy"/>
</dbReference>
<dbReference type="InterPro" id="IPR009398">
    <property type="entry name" value="Adcy_conserved_dom"/>
</dbReference>
<dbReference type="InterPro" id="IPR029787">
    <property type="entry name" value="Nucleotide_cyclase"/>
</dbReference>
<dbReference type="PANTHER" id="PTHR45627">
    <property type="entry name" value="ADENYLATE CYCLASE TYPE 1"/>
    <property type="match status" value="1"/>
</dbReference>
<dbReference type="PANTHER" id="PTHR45627:SF9">
    <property type="entry name" value="ADENYLATE CYCLASE TYPE 7"/>
    <property type="match status" value="1"/>
</dbReference>
<dbReference type="Pfam" id="PF16214">
    <property type="entry name" value="AC_N"/>
    <property type="match status" value="1"/>
</dbReference>
<dbReference type="Pfam" id="PF06327">
    <property type="entry name" value="Adcy_cons_dom"/>
    <property type="match status" value="1"/>
</dbReference>
<dbReference type="Pfam" id="PF00211">
    <property type="entry name" value="Guanylate_cyc"/>
    <property type="match status" value="2"/>
</dbReference>
<dbReference type="PIRSF" id="PIRSF039050">
    <property type="entry name" value="Ade_cyc"/>
    <property type="match status" value="1"/>
</dbReference>
<dbReference type="SMART" id="SM00044">
    <property type="entry name" value="CYCc"/>
    <property type="match status" value="2"/>
</dbReference>
<dbReference type="SUPFAM" id="SSF55073">
    <property type="entry name" value="Nucleotide cyclase"/>
    <property type="match status" value="2"/>
</dbReference>
<dbReference type="PROSITE" id="PS00452">
    <property type="entry name" value="GUANYLATE_CYCLASE_1"/>
    <property type="match status" value="1"/>
</dbReference>
<dbReference type="PROSITE" id="PS50125">
    <property type="entry name" value="GUANYLATE_CYCLASE_2"/>
    <property type="match status" value="2"/>
</dbReference>
<keyword id="KW-0067">ATP-binding</keyword>
<keyword id="KW-0115">cAMP biosynthesis</keyword>
<keyword id="KW-0325">Glycoprotein</keyword>
<keyword id="KW-0456">Lyase</keyword>
<keyword id="KW-0460">Magnesium</keyword>
<keyword id="KW-0464">Manganese</keyword>
<keyword id="KW-0472">Membrane</keyword>
<keyword id="KW-0479">Metal-binding</keyword>
<keyword id="KW-0547">Nucleotide-binding</keyword>
<keyword id="KW-1267">Proteomics identification</keyword>
<keyword id="KW-1185">Reference proteome</keyword>
<keyword id="KW-0677">Repeat</keyword>
<keyword id="KW-0812">Transmembrane</keyword>
<keyword id="KW-1133">Transmembrane helix</keyword>
<sequence length="1080" mass="120308">MPAKGRYFLNEGEEGPDQDALYEKYQLTSQHGPLLLTLLLVAATACVALIIIAFSQGDPSRHQAILGMAFLVLAVFAALSVLMYVECLLRRWLRALALLTWACLVALGYVLVFDAWTKAACAWEQVPFFLFIVFVVYTLLPFSMRGAVAVGAVSTASHLLVLGSLMGGFTTPSVRVGLQLLANAVIFLCGNLTGAFHKHQMQDASRDLFTYTVKCIQIRRKLRIEKRQQENLLLSVLPAHISMGMKLAIIERLKEHGDRRCMPDNNFHSLYVKRHQNVSILYADIVGFTQLASDCSPKELVVVLNELFGKFDQIAKANECMRIKILGDCYYCVSGLPVSLPTHARNCVKMGLDMCQAIKQVREATGVDINMRVGIHSGNVLCGVIGLRKWQYDVWSHDVSLANRMEAAGVPGRVHITEATLKHLDKAYEVEDGHGQQRDPYLKEMNIRTYLVIDPRSQQPPPPSQHLPRPKGDAALKMRASVRMTRYLESWGAARPFAHLNHRESVSSGETHVPNGRRPKSVPQRHRRTPDRSMSPKGRSEDDSYDDEMLSAIEGLSSTRPCCSKSDDFYTFGSIFLEKGFEREYRLAPIPRARHDFACASLIFVCILLVHVLLMPRTAALGVSFGLVACVLGLVLGLCFATKFSRCCPARGTLCTISERVETQPLLRLTLAVLTIGSLLTVAIINLPLMPFQVPELPVGNETGLLAASSKTRALCEPLPYYTCSCVLGFIACSVFLRMSLEPKVVLLTVALVAYLVLFNLSPCWQWDCCGQGLGNLTKPNGTTSGTPSCSWKDLKTMTNFYLVLFYITLLTLSRQIDYYCRLDCLWKKKFKKEHEEFETMENVNRLLLENVLPAHVAAHFIGDKLNEDWYHQSYDCVCVMFASVPDFKVFYTECDVNKEGLECLRLLNEIIADFDELLLKPKFSGVEKIKTIGSTYMAAAGLSVASGHENQELERQHAHIGVMVEFSIALMSKLDGINRHSFNSFRLRVGINHGPVIAGVIGARKPQYDIWGNTVNVASRMESTGELGKIQVTEETCTILQGLGYSCECRGLINVKGKGELRTYFVCTDTAKFQGLGLN</sequence>
<feature type="chain" id="PRO_0000195703" description="Adenylate cyclase type 7">
    <location>
        <begin position="1"/>
        <end position="1080"/>
    </location>
</feature>
<feature type="topological domain" description="Cytoplasmic" evidence="4">
    <location>
        <begin position="1"/>
        <end position="33"/>
    </location>
</feature>
<feature type="transmembrane region" description="Helical" evidence="4">
    <location>
        <begin position="34"/>
        <end position="54"/>
    </location>
</feature>
<feature type="transmembrane region" description="Helical" evidence="4">
    <location>
        <begin position="63"/>
        <end position="83"/>
    </location>
</feature>
<feature type="transmembrane region" description="Helical" evidence="4">
    <location>
        <begin position="95"/>
        <end position="117"/>
    </location>
</feature>
<feature type="transmembrane region" description="Helical" evidence="4">
    <location>
        <begin position="122"/>
        <end position="142"/>
    </location>
</feature>
<feature type="transmembrane region" description="Helical" evidence="4">
    <location>
        <begin position="147"/>
        <end position="167"/>
    </location>
</feature>
<feature type="transmembrane region" description="Helical" evidence="4">
    <location>
        <begin position="176"/>
        <end position="196"/>
    </location>
</feature>
<feature type="topological domain" description="Cytoplasmic" evidence="4">
    <location>
        <begin position="197"/>
        <end position="594"/>
    </location>
</feature>
<feature type="transmembrane region" description="Helical" evidence="4">
    <location>
        <begin position="595"/>
        <end position="615"/>
    </location>
</feature>
<feature type="transmembrane region" description="Helical" evidence="4">
    <location>
        <begin position="620"/>
        <end position="640"/>
    </location>
</feature>
<feature type="transmembrane region" description="Helical" evidence="4">
    <location>
        <begin position="669"/>
        <end position="688"/>
    </location>
</feature>
<feature type="transmembrane region" description="Helical" evidence="4">
    <location>
        <begin position="718"/>
        <end position="737"/>
    </location>
</feature>
<feature type="transmembrane region" description="Helical" evidence="4">
    <location>
        <begin position="746"/>
        <end position="773"/>
    </location>
</feature>
<feature type="transmembrane region" description="Helical" evidence="4">
    <location>
        <begin position="794"/>
        <end position="814"/>
    </location>
</feature>
<feature type="topological domain" description="Cytoplasmic" evidence="4">
    <location>
        <begin position="815"/>
        <end position="1080"/>
    </location>
</feature>
<feature type="domain" description="Guanylate cyclase 1" evidence="5">
    <location>
        <begin position="279"/>
        <end position="406"/>
    </location>
</feature>
<feature type="domain" description="Guanylate cyclase 2" evidence="5">
    <location>
        <begin position="879"/>
        <end position="1023"/>
    </location>
</feature>
<feature type="region of interest" description="Disordered" evidence="6">
    <location>
        <begin position="454"/>
        <end position="474"/>
    </location>
</feature>
<feature type="region of interest" description="Mediates regulation of adenylate cyclase activity by C5 alpha-induced G- beta and gamma pathway" evidence="10">
    <location>
        <begin position="477"/>
        <end position="482"/>
    </location>
</feature>
<feature type="region of interest" description="Mediates regulation of adenylate cyclase activity by sphingosine 1-phosphate-induced G alpha 13 pathway" evidence="10">
    <location>
        <begin position="491"/>
        <end position="499"/>
    </location>
</feature>
<feature type="region of interest" description="Disordered" evidence="6">
    <location>
        <begin position="504"/>
        <end position="546"/>
    </location>
</feature>
<feature type="region of interest" description="Modulates adenylate cyclase activity by modulating the binding of G(s)alpha to the high-affinity G(s)alpha binding site in 7C1a/7C2" evidence="8">
    <location>
        <begin position="506"/>
        <end position="584"/>
    </location>
</feature>
<feature type="compositionally biased region" description="Basic residues" evidence="6">
    <location>
        <begin position="515"/>
        <end position="529"/>
    </location>
</feature>
<feature type="binding site" evidence="2">
    <location>
        <begin position="284"/>
        <end position="289"/>
    </location>
    <ligand>
        <name>ATP</name>
        <dbReference type="ChEBI" id="CHEBI:30616"/>
    </ligand>
</feature>
<feature type="binding site" evidence="5">
    <location>
        <position position="284"/>
    </location>
    <ligand>
        <name>Mg(2+)</name>
        <dbReference type="ChEBI" id="CHEBI:18420"/>
        <label>1</label>
        <note>catalytic</note>
    </ligand>
</feature>
<feature type="binding site" evidence="5">
    <location>
        <position position="284"/>
    </location>
    <ligand>
        <name>Mg(2+)</name>
        <dbReference type="ChEBI" id="CHEBI:18420"/>
        <label>2</label>
        <note>catalytic</note>
    </ligand>
</feature>
<feature type="binding site" evidence="5">
    <location>
        <position position="285"/>
    </location>
    <ligand>
        <name>Mg(2+)</name>
        <dbReference type="ChEBI" id="CHEBI:18420"/>
        <label>2</label>
        <note>catalytic</note>
    </ligand>
</feature>
<feature type="binding site" evidence="2">
    <location>
        <begin position="326"/>
        <end position="328"/>
    </location>
    <ligand>
        <name>ATP</name>
        <dbReference type="ChEBI" id="CHEBI:30616"/>
    </ligand>
</feature>
<feature type="binding site" evidence="5">
    <location>
        <position position="328"/>
    </location>
    <ligand>
        <name>Mg(2+)</name>
        <dbReference type="ChEBI" id="CHEBI:18420"/>
        <label>1</label>
        <note>catalytic</note>
    </ligand>
</feature>
<feature type="binding site" evidence="5">
    <location>
        <position position="328"/>
    </location>
    <ligand>
        <name>Mg(2+)</name>
        <dbReference type="ChEBI" id="CHEBI:18420"/>
        <label>2</label>
        <note>catalytic</note>
    </ligand>
</feature>
<feature type="binding site" evidence="2">
    <location>
        <position position="372"/>
    </location>
    <ligand>
        <name>ATP</name>
        <dbReference type="ChEBI" id="CHEBI:30616"/>
    </ligand>
</feature>
<feature type="binding site" evidence="1">
    <location>
        <position position="931"/>
    </location>
    <ligand>
        <name>ATP</name>
        <dbReference type="ChEBI" id="CHEBI:30616"/>
    </ligand>
</feature>
<feature type="binding site" evidence="1">
    <location>
        <begin position="1010"/>
        <end position="1012"/>
    </location>
    <ligand>
        <name>ATP</name>
        <dbReference type="ChEBI" id="CHEBI:30616"/>
    </ligand>
</feature>
<feature type="binding site" evidence="1">
    <location>
        <begin position="1017"/>
        <end position="1021"/>
    </location>
    <ligand>
        <name>ATP</name>
        <dbReference type="ChEBI" id="CHEBI:30616"/>
    </ligand>
</feature>
<feature type="binding site" evidence="1">
    <location>
        <position position="1057"/>
    </location>
    <ligand>
        <name>ATP</name>
        <dbReference type="ChEBI" id="CHEBI:30616"/>
    </ligand>
</feature>
<feature type="glycosylation site" description="N-linked (GlcNAc...) asparagine" evidence="4">
    <location>
        <position position="701"/>
    </location>
</feature>
<feature type="glycosylation site" description="N-linked (GlcNAc...) asparagine" evidence="4">
    <location>
        <position position="776"/>
    </location>
</feature>
<feature type="glycosylation site" description="N-linked (GlcNAc...) asparagine" evidence="4">
    <location>
        <position position="781"/>
    </location>
</feature>
<feature type="mutagenesis site" description="Does not affect cAMP biosynthetic process in response to sphingosine 1-phosphate stimulation. Reduces by 40% cAMP biosynthetic process in response to C5 alpha chain stimulation." evidence="10">
    <original>KMRASV</original>
    <variation>NAAIRS</variation>
    <location>
        <begin position="477"/>
        <end position="482"/>
    </location>
</feature>
<feature type="mutagenesis site" description="Reduces cAMP biosynthetic process in response to C5 alpha chain stimulation and more severely in response to sphingosine 1-phosphate stimulation." evidence="10">
    <original>TRYLE</original>
    <variation>NAAIR</variation>
    <location>
        <begin position="485"/>
        <end position="489"/>
    </location>
</feature>
<feature type="mutagenesis site" description="Does not affect cAMP biosynthetic process in response to C5 alpha chain stimulation. Reduces by 40?60% cAMP biosynthetic process in response to sphingosine 1-phosphate stimulation." evidence="10">
    <original>WGAARP</original>
    <variation>NAAIRS</variation>
    <location>
        <begin position="491"/>
        <end position="496"/>
    </location>
</feature>
<feature type="mutagenesis site" description="Does not affect cAMP biosynthetic process in response to C5 alpha chain stimulation. Reduces by 40?60% cAMP biosynthetic process in response to sphingosine 1-phosphate stimulation." evidence="10">
    <original>ARPFAH</original>
    <variation>NAAIRS</variation>
    <location>
        <begin position="494"/>
        <end position="499"/>
    </location>
</feature>
<feature type="mutagenesis site" description="Reduces cAMP biosynthetic process in response to C5 alpha chain stimulation and more severely in response to sphingosine 1-phosphate stimulation." evidence="10">
    <original>SKSDDF</original>
    <variation>NAAIRS</variation>
    <location>
        <begin position="564"/>
        <end position="569"/>
    </location>
</feature>
<protein>
    <recommendedName>
        <fullName evidence="13">Adenylate cyclase type 7</fullName>
        <ecNumber evidence="14 15">4.6.1.1</ecNumber>
    </recommendedName>
    <alternativeName>
        <fullName>ATP pyrophosphate-lyase 7</fullName>
    </alternativeName>
    <alternativeName>
        <fullName>Adenylate cyclase type VII</fullName>
    </alternativeName>
    <alternativeName>
        <fullName>Adenylyl cyclase 7</fullName>
    </alternativeName>
</protein>
<evidence type="ECO:0000250" key="1">
    <source>
        <dbReference type="UniProtKB" id="P26769"/>
    </source>
</evidence>
<evidence type="ECO:0000250" key="2">
    <source>
        <dbReference type="UniProtKB" id="P30803"/>
    </source>
</evidence>
<evidence type="ECO:0000250" key="3">
    <source>
        <dbReference type="UniProtKB" id="P51829"/>
    </source>
</evidence>
<evidence type="ECO:0000255" key="4"/>
<evidence type="ECO:0000255" key="5">
    <source>
        <dbReference type="PROSITE-ProRule" id="PRU00099"/>
    </source>
</evidence>
<evidence type="ECO:0000256" key="6">
    <source>
        <dbReference type="SAM" id="MobiDB-lite"/>
    </source>
</evidence>
<evidence type="ECO:0000269" key="7">
    <source>
    </source>
</evidence>
<evidence type="ECO:0000269" key="8">
    <source>
    </source>
</evidence>
<evidence type="ECO:0000269" key="9">
    <source>
    </source>
</evidence>
<evidence type="ECO:0000269" key="10">
    <source>
    </source>
</evidence>
<evidence type="ECO:0000269" key="11">
    <source>
    </source>
</evidence>
<evidence type="ECO:0000303" key="12">
    <source>
    </source>
</evidence>
<evidence type="ECO:0000305" key="13"/>
<evidence type="ECO:0000305" key="14">
    <source>
    </source>
</evidence>
<evidence type="ECO:0000305" key="15">
    <source>
    </source>
</evidence>
<evidence type="ECO:0000312" key="16">
    <source>
        <dbReference type="HGNC" id="HGNC:238"/>
    </source>
</evidence>
<reference key="1">
    <citation type="journal article" date="1994" name="DNA Res.">
        <title>Prediction of the coding sequences of unidentified human genes. I. The coding sequences of 40 new genes (KIAA0001-KIAA0040) deduced by analysis of randomly sampled cDNA clones from human immature myeloid cell line KG-1.</title>
        <authorList>
            <person name="Nomura N."/>
            <person name="Miyajima N."/>
            <person name="Sazuka T."/>
            <person name="Tanaka A."/>
            <person name="Kawarabayasi Y."/>
            <person name="Sato S."/>
            <person name="Nagase T."/>
            <person name="Seki N."/>
            <person name="Ishikawa K."/>
            <person name="Tabata S."/>
        </authorList>
    </citation>
    <scope>NUCLEOTIDE SEQUENCE [LARGE SCALE MRNA]</scope>
    <source>
        <tissue>Bone marrow</tissue>
    </source>
</reference>
<reference key="2">
    <citation type="journal article" date="2004" name="Nature">
        <title>The sequence and analysis of duplication-rich human chromosome 16.</title>
        <authorList>
            <person name="Martin J."/>
            <person name="Han C."/>
            <person name="Gordon L.A."/>
            <person name="Terry A."/>
            <person name="Prabhakar S."/>
            <person name="She X."/>
            <person name="Xie G."/>
            <person name="Hellsten U."/>
            <person name="Chan Y.M."/>
            <person name="Altherr M."/>
            <person name="Couronne O."/>
            <person name="Aerts A."/>
            <person name="Bajorek E."/>
            <person name="Black S."/>
            <person name="Blumer H."/>
            <person name="Branscomb E."/>
            <person name="Brown N.C."/>
            <person name="Bruno W.J."/>
            <person name="Buckingham J.M."/>
            <person name="Callen D.F."/>
            <person name="Campbell C.S."/>
            <person name="Campbell M.L."/>
            <person name="Campbell E.W."/>
            <person name="Caoile C."/>
            <person name="Challacombe J.F."/>
            <person name="Chasteen L.A."/>
            <person name="Chertkov O."/>
            <person name="Chi H.C."/>
            <person name="Christensen M."/>
            <person name="Clark L.M."/>
            <person name="Cohn J.D."/>
            <person name="Denys M."/>
            <person name="Detter J.C."/>
            <person name="Dickson M."/>
            <person name="Dimitrijevic-Bussod M."/>
            <person name="Escobar J."/>
            <person name="Fawcett J.J."/>
            <person name="Flowers D."/>
            <person name="Fotopulos D."/>
            <person name="Glavina T."/>
            <person name="Gomez M."/>
            <person name="Gonzales E."/>
            <person name="Goodstein D."/>
            <person name="Goodwin L.A."/>
            <person name="Grady D.L."/>
            <person name="Grigoriev I."/>
            <person name="Groza M."/>
            <person name="Hammon N."/>
            <person name="Hawkins T."/>
            <person name="Haydu L."/>
            <person name="Hildebrand C.E."/>
            <person name="Huang W."/>
            <person name="Israni S."/>
            <person name="Jett J."/>
            <person name="Jewett P.B."/>
            <person name="Kadner K."/>
            <person name="Kimball H."/>
            <person name="Kobayashi A."/>
            <person name="Krawczyk M.-C."/>
            <person name="Leyba T."/>
            <person name="Longmire J.L."/>
            <person name="Lopez F."/>
            <person name="Lou Y."/>
            <person name="Lowry S."/>
            <person name="Ludeman T."/>
            <person name="Manohar C.F."/>
            <person name="Mark G.A."/>
            <person name="McMurray K.L."/>
            <person name="Meincke L.J."/>
            <person name="Morgan J."/>
            <person name="Moyzis R.K."/>
            <person name="Mundt M.O."/>
            <person name="Munk A.C."/>
            <person name="Nandkeshwar R.D."/>
            <person name="Pitluck S."/>
            <person name="Pollard M."/>
            <person name="Predki P."/>
            <person name="Parson-Quintana B."/>
            <person name="Ramirez L."/>
            <person name="Rash S."/>
            <person name="Retterer J."/>
            <person name="Ricke D.O."/>
            <person name="Robinson D.L."/>
            <person name="Rodriguez A."/>
            <person name="Salamov A."/>
            <person name="Saunders E.H."/>
            <person name="Scott D."/>
            <person name="Shough T."/>
            <person name="Stallings R.L."/>
            <person name="Stalvey M."/>
            <person name="Sutherland R.D."/>
            <person name="Tapia R."/>
            <person name="Tesmer J.G."/>
            <person name="Thayer N."/>
            <person name="Thompson L.S."/>
            <person name="Tice H."/>
            <person name="Torney D.C."/>
            <person name="Tran-Gyamfi M."/>
            <person name="Tsai M."/>
            <person name="Ulanovsky L.E."/>
            <person name="Ustaszewska A."/>
            <person name="Vo N."/>
            <person name="White P.S."/>
            <person name="Williams A.L."/>
            <person name="Wills P.L."/>
            <person name="Wu J.-R."/>
            <person name="Wu K."/>
            <person name="Yang J."/>
            <person name="DeJong P."/>
            <person name="Bruce D."/>
            <person name="Doggett N.A."/>
            <person name="Deaven L."/>
            <person name="Schmutz J."/>
            <person name="Grimwood J."/>
            <person name="Richardson P."/>
            <person name="Rokhsar D.S."/>
            <person name="Eichler E.E."/>
            <person name="Gilna P."/>
            <person name="Lucas S.M."/>
            <person name="Myers R.M."/>
            <person name="Rubin E.M."/>
            <person name="Pennacchio L.A."/>
        </authorList>
    </citation>
    <scope>NUCLEOTIDE SEQUENCE [LARGE SCALE GENOMIC DNA]</scope>
</reference>
<reference key="3">
    <citation type="journal article" date="2004" name="Genome Res.">
        <title>The status, quality, and expansion of the NIH full-length cDNA project: the Mammalian Gene Collection (MGC).</title>
        <authorList>
            <consortium name="The MGC Project Team"/>
        </authorList>
    </citation>
    <scope>NUCLEOTIDE SEQUENCE [LARGE SCALE MRNA]</scope>
</reference>
<reference key="4">
    <citation type="journal article" date="2003" name="J. Biol. Chem.">
        <title>Ethanol-induced phosphorylation and potentiation of the activity of type 7 adenylyl cyclase. Involvement of protein kinase C delta.</title>
        <authorList>
            <person name="Nelson E.J."/>
            <person name="Hellevuo K."/>
            <person name="Yoshimura M."/>
            <person name="Tabakoff B."/>
        </authorList>
    </citation>
    <scope>PHOSPHORYLATION</scope>
    <scope>ACTIVITY REGULATION</scope>
</reference>
<reference key="5">
    <citation type="journal article" date="2004" name="Biochemistry">
        <title>A soluble C1b protein and its regulation of soluble type 7 adenylyl cyclase.</title>
        <authorList>
            <person name="Beeler J.A."/>
            <person name="Yan S.Z."/>
            <person name="Bykov S."/>
            <person name="Murza A."/>
            <person name="Asher S."/>
            <person name="Tang W.J."/>
        </authorList>
    </citation>
    <scope>REGION</scope>
</reference>
<reference key="6">
    <citation type="journal article" date="2008" name="J. Biol. Chem.">
        <title>Regulation of cAMP responses by the G12/13 pathway converges on adenylyl cyclase VII.</title>
        <authorList>
            <person name="Jiang L.I."/>
            <person name="Collins J."/>
            <person name="Davis R."/>
            <person name="Fraser I.D."/>
            <person name="Sternweis P.C."/>
        </authorList>
    </citation>
    <scope>FUNCTION</scope>
    <scope>ACTIVITY REGULATION</scope>
</reference>
<reference key="7">
    <citation type="journal article" date="2013" name="Mol. Pharmacol.">
        <title>Regions on adenylyl cyclase VII required for selective regulation by the G13 pathway.</title>
        <authorList>
            <person name="Jiang L.I."/>
            <person name="Wang J.E."/>
            <person name="Sternweis P.C."/>
        </authorList>
    </citation>
    <scope>FUNCTION</scope>
    <scope>REGION</scope>
    <scope>MUTAGENESIS OF 477-LYS--VAL-482; 485-THR--SER-490; 491-TRP--PRO-496; 494-ALA--HIS-499 AND 564-SER--PHE-569</scope>
    <scope>ACTIVITY REGULATION</scope>
</reference>
<reference key="8">
    <citation type="journal article" date="2013" name="Mol. Pharmacol.">
        <title>Prostaglandin E receptor EP1 forms a complex with dopamine D1 receptor and directs D1-induced cAMP production to adenylyl cyclase 7 through mobilizing G(betagamma) subunits in human embryonic kidney 293T cells.</title>
        <authorList>
            <person name="Ehrlich A.T."/>
            <person name="Furuyashiki T."/>
            <person name="Kitaoka S."/>
            <person name="Kakizuka A."/>
            <person name="Narumiya S."/>
        </authorList>
    </citation>
    <scope>FUNCTION</scope>
</reference>
<organism>
    <name type="scientific">Homo sapiens</name>
    <name type="common">Human</name>
    <dbReference type="NCBI Taxonomy" id="9606"/>
    <lineage>
        <taxon>Eukaryota</taxon>
        <taxon>Metazoa</taxon>
        <taxon>Chordata</taxon>
        <taxon>Craniata</taxon>
        <taxon>Vertebrata</taxon>
        <taxon>Euteleostomi</taxon>
        <taxon>Mammalia</taxon>
        <taxon>Eutheria</taxon>
        <taxon>Euarchontoglires</taxon>
        <taxon>Primates</taxon>
        <taxon>Haplorrhini</taxon>
        <taxon>Catarrhini</taxon>
        <taxon>Hominidae</taxon>
        <taxon>Homo</taxon>
    </lineage>
</organism>
<gene>
    <name evidence="16" type="primary">ADCY7</name>
    <name evidence="12" type="synonym">KIAA0037</name>
</gene>